<proteinExistence type="inferred from homology"/>
<sequence>MTRSSLARAPVLLHIGAGSFHRAHQAWYLHRVNAAVPPGERWTLTVGNIRDDMHATLAALAAQQGAYTLETVTPQGERAYETIRSIARVLPWSADLAALINTGADPACRIVSFTVTEGGYYLDEHDRLDVTHPDLAADLRGARSTLYGALAALLAERRQRGAGPLTLQSCDNLRSNGARFRAGMRAFLALRGDAALLAWFDANVSCPSAMVDRITPRPTDDVRTRVHAATGVDDRCPVMGESFIQWVIEDNFIAGRPAWEIAGAEIVADVHPYEEAKIRILNATHSCIAWAGTLAGLTYIHEGMRDAAIYRFAYDYVTDDVIPCLTPSPLDLERYRDVVLERFGNPYVLDTNQRVAADGFSKIPGFIAPTLAECFARGADPVATAVLPALFLGFLEGWARGTLPYVYQDGVMDGAAARSIVEAPDSVAAFCSDRQLWGSLAGRDALVQAVRAGRARVEAWRAARR</sequence>
<comment type="catalytic activity">
    <reaction>
        <text>D-arabinitol + NAD(+) = D-xylulose + NADH + H(+)</text>
        <dbReference type="Rhea" id="RHEA:17921"/>
        <dbReference type="ChEBI" id="CHEBI:15378"/>
        <dbReference type="ChEBI" id="CHEBI:17140"/>
        <dbReference type="ChEBI" id="CHEBI:18333"/>
        <dbReference type="ChEBI" id="CHEBI:57540"/>
        <dbReference type="ChEBI" id="CHEBI:57945"/>
        <dbReference type="EC" id="1.1.1.11"/>
    </reaction>
</comment>
<comment type="pathway">
    <text>Carbohydrate metabolism; D-arabinitol metabolism.</text>
</comment>
<comment type="similarity">
    <text evidence="1">Belongs to the mannitol dehydrogenase family.</text>
</comment>
<dbReference type="EC" id="1.1.1.11"/>
<dbReference type="EMBL" id="AL646052">
    <property type="protein sequence ID" value="CAD15836.1"/>
    <property type="molecule type" value="Genomic_DNA"/>
</dbReference>
<dbReference type="RefSeq" id="WP_011002060.1">
    <property type="nucleotide sequence ID" value="NC_003295.1"/>
</dbReference>
<dbReference type="SMR" id="P58708"/>
<dbReference type="STRING" id="267608.RSc2129"/>
<dbReference type="EnsemblBacteria" id="CAD15836">
    <property type="protein sequence ID" value="CAD15836"/>
    <property type="gene ID" value="RSc2129"/>
</dbReference>
<dbReference type="KEGG" id="rso:RSc2129"/>
<dbReference type="PATRIC" id="fig|267608.8.peg.2163"/>
<dbReference type="eggNOG" id="COG0246">
    <property type="taxonomic scope" value="Bacteria"/>
</dbReference>
<dbReference type="HOGENOM" id="CLU_027324_0_2_4"/>
<dbReference type="UniPathway" id="UPA00380"/>
<dbReference type="Proteomes" id="UP000001436">
    <property type="component" value="Chromosome"/>
</dbReference>
<dbReference type="GO" id="GO:0047813">
    <property type="term" value="F:D-arabinitol 4-dehydrogenase activity"/>
    <property type="evidence" value="ECO:0007669"/>
    <property type="project" value="UniProtKB-EC"/>
</dbReference>
<dbReference type="GO" id="GO:0008866">
    <property type="term" value="F:fructuronate reductase activity"/>
    <property type="evidence" value="ECO:0007669"/>
    <property type="project" value="TreeGrafter"/>
</dbReference>
<dbReference type="GO" id="GO:0051161">
    <property type="term" value="P:arabitol metabolic process"/>
    <property type="evidence" value="ECO:0007669"/>
    <property type="project" value="UniProtKB-UniPathway"/>
</dbReference>
<dbReference type="GO" id="GO:0042840">
    <property type="term" value="P:D-glucuronate catabolic process"/>
    <property type="evidence" value="ECO:0007669"/>
    <property type="project" value="TreeGrafter"/>
</dbReference>
<dbReference type="Gene3D" id="1.10.1040.10">
    <property type="entry name" value="N-(1-d-carboxylethyl)-l-norvaline Dehydrogenase, domain 2"/>
    <property type="match status" value="1"/>
</dbReference>
<dbReference type="Gene3D" id="3.40.50.720">
    <property type="entry name" value="NAD(P)-binding Rossmann-like Domain"/>
    <property type="match status" value="1"/>
</dbReference>
<dbReference type="InterPro" id="IPR008927">
    <property type="entry name" value="6-PGluconate_DH-like_C_sf"/>
</dbReference>
<dbReference type="InterPro" id="IPR013328">
    <property type="entry name" value="6PGD_dom2"/>
</dbReference>
<dbReference type="InterPro" id="IPR050025">
    <property type="entry name" value="DalD"/>
</dbReference>
<dbReference type="InterPro" id="IPR000669">
    <property type="entry name" value="Mannitol_DH"/>
</dbReference>
<dbReference type="InterPro" id="IPR050988">
    <property type="entry name" value="Mannitol_DH/Oxidoreductase"/>
</dbReference>
<dbReference type="InterPro" id="IPR013118">
    <property type="entry name" value="Mannitol_DH_C"/>
</dbReference>
<dbReference type="InterPro" id="IPR013131">
    <property type="entry name" value="Mannitol_DH_N"/>
</dbReference>
<dbReference type="InterPro" id="IPR036291">
    <property type="entry name" value="NAD(P)-bd_dom_sf"/>
</dbReference>
<dbReference type="NCBIfam" id="NF043014">
    <property type="entry name" value="DArabDhDalD"/>
    <property type="match status" value="1"/>
</dbReference>
<dbReference type="PANTHER" id="PTHR43362:SF7">
    <property type="entry name" value="D-MANNONATE OXIDOREDUCTASE"/>
    <property type="match status" value="1"/>
</dbReference>
<dbReference type="PANTHER" id="PTHR43362">
    <property type="entry name" value="MANNITOL DEHYDROGENASE DSF1-RELATED"/>
    <property type="match status" value="1"/>
</dbReference>
<dbReference type="Pfam" id="PF01232">
    <property type="entry name" value="Mannitol_dh"/>
    <property type="match status" value="1"/>
</dbReference>
<dbReference type="Pfam" id="PF08125">
    <property type="entry name" value="Mannitol_dh_C"/>
    <property type="match status" value="1"/>
</dbReference>
<dbReference type="PRINTS" id="PR00084">
    <property type="entry name" value="MTLDHDRGNASE"/>
</dbReference>
<dbReference type="SUPFAM" id="SSF48179">
    <property type="entry name" value="6-phosphogluconate dehydrogenase C-terminal domain-like"/>
    <property type="match status" value="1"/>
</dbReference>
<dbReference type="SUPFAM" id="SSF51735">
    <property type="entry name" value="NAD(P)-binding Rossmann-fold domains"/>
    <property type="match status" value="1"/>
</dbReference>
<organism>
    <name type="scientific">Ralstonia nicotianae (strain ATCC BAA-1114 / GMI1000)</name>
    <name type="common">Ralstonia solanacearum</name>
    <dbReference type="NCBI Taxonomy" id="267608"/>
    <lineage>
        <taxon>Bacteria</taxon>
        <taxon>Pseudomonadati</taxon>
        <taxon>Pseudomonadota</taxon>
        <taxon>Betaproteobacteria</taxon>
        <taxon>Burkholderiales</taxon>
        <taxon>Burkholderiaceae</taxon>
        <taxon>Ralstonia</taxon>
        <taxon>Ralstonia solanacearum species complex</taxon>
    </lineage>
</organism>
<reference key="1">
    <citation type="journal article" date="2002" name="Nature">
        <title>Genome sequence of the plant pathogen Ralstonia solanacearum.</title>
        <authorList>
            <person name="Salanoubat M."/>
            <person name="Genin S."/>
            <person name="Artiguenave F."/>
            <person name="Gouzy J."/>
            <person name="Mangenot S."/>
            <person name="Arlat M."/>
            <person name="Billault A."/>
            <person name="Brottier P."/>
            <person name="Camus J.-C."/>
            <person name="Cattolico L."/>
            <person name="Chandler M."/>
            <person name="Choisne N."/>
            <person name="Claudel-Renard C."/>
            <person name="Cunnac S."/>
            <person name="Demange N."/>
            <person name="Gaspin C."/>
            <person name="Lavie M."/>
            <person name="Moisan A."/>
            <person name="Robert C."/>
            <person name="Saurin W."/>
            <person name="Schiex T."/>
            <person name="Siguier P."/>
            <person name="Thebault P."/>
            <person name="Whalen M."/>
            <person name="Wincker P."/>
            <person name="Levy M."/>
            <person name="Weissenbach J."/>
            <person name="Boucher C.A."/>
        </authorList>
    </citation>
    <scope>NUCLEOTIDE SEQUENCE [LARGE SCALE GENOMIC DNA]</scope>
    <source>
        <strain>ATCC BAA-1114 / GMI1000</strain>
    </source>
</reference>
<name>DALD_RALN1</name>
<feature type="chain" id="PRO_0000170736" description="D-arabinitol 4-dehydrogenase">
    <location>
        <begin position="1"/>
        <end position="465"/>
    </location>
</feature>
<protein>
    <recommendedName>
        <fullName>D-arabinitol 4-dehydrogenase</fullName>
        <ecNumber>1.1.1.11</ecNumber>
    </recommendedName>
</protein>
<gene>
    <name type="primary">dalD</name>
    <name type="ordered locus">RSc2129</name>
    <name type="ORF">RS01475</name>
</gene>
<evidence type="ECO:0000305" key="1"/>
<keyword id="KW-0520">NAD</keyword>
<keyword id="KW-0560">Oxidoreductase</keyword>
<keyword id="KW-1185">Reference proteome</keyword>
<accession>P58708</accession>